<gene>
    <name type="primary">Alb</name>
    <name type="synonym">Alb-1</name>
    <name type="synonym">Alb1</name>
</gene>
<protein>
    <recommendedName>
        <fullName>Albumin</fullName>
    </recommendedName>
</protein>
<feature type="signal peptide" evidence="4">
    <location>
        <begin position="1"/>
        <end position="18"/>
    </location>
</feature>
<feature type="propeptide" id="PRO_0000001073">
    <location>
        <begin position="19"/>
        <end position="24"/>
    </location>
</feature>
<feature type="chain" id="PRO_0000001074" description="Albumin">
    <location>
        <begin position="25"/>
        <end position="608"/>
    </location>
</feature>
<feature type="domain" description="Albumin 1" evidence="5">
    <location>
        <begin position="19"/>
        <end position="211"/>
    </location>
</feature>
<feature type="domain" description="Albumin 2" evidence="5">
    <location>
        <begin position="212"/>
        <end position="403"/>
    </location>
</feature>
<feature type="domain" description="Albumin 3" evidence="5">
    <location>
        <begin position="404"/>
        <end position="601"/>
    </location>
</feature>
<feature type="binding site" evidence="3">
    <location>
        <position position="27"/>
    </location>
    <ligand>
        <name>Cu cation</name>
        <dbReference type="ChEBI" id="CHEBI:23378"/>
    </ligand>
</feature>
<feature type="binding site" evidence="2">
    <location>
        <position position="30"/>
    </location>
    <ligand>
        <name>Ca(2+)</name>
        <dbReference type="ChEBI" id="CHEBI:29108"/>
        <label>1</label>
    </ligand>
</feature>
<feature type="binding site" evidence="2">
    <location>
        <position position="37"/>
    </location>
    <ligand>
        <name>Ca(2+)</name>
        <dbReference type="ChEBI" id="CHEBI:29108"/>
        <label>2</label>
    </ligand>
</feature>
<feature type="binding site" evidence="1">
    <location>
        <position position="91"/>
    </location>
    <ligand>
        <name>Zn(2+)</name>
        <dbReference type="ChEBI" id="CHEBI:29105"/>
    </ligand>
</feature>
<feature type="binding site" evidence="2">
    <location>
        <position position="268"/>
    </location>
    <ligand>
        <name>Ca(2+)</name>
        <dbReference type="ChEBI" id="CHEBI:29108"/>
        <label>1</label>
    </ligand>
</feature>
<feature type="binding site" evidence="1">
    <location>
        <position position="271"/>
    </location>
    <ligand>
        <name>Zn(2+)</name>
        <dbReference type="ChEBI" id="CHEBI:29105"/>
    </ligand>
</feature>
<feature type="binding site" evidence="2">
    <location>
        <position position="273"/>
    </location>
    <ligand>
        <name>Ca(2+)</name>
        <dbReference type="ChEBI" id="CHEBI:29108"/>
        <label>1</label>
    </ligand>
</feature>
<feature type="binding site" evidence="1">
    <location>
        <position position="273"/>
    </location>
    <ligand>
        <name>Zn(2+)</name>
        <dbReference type="ChEBI" id="CHEBI:29105"/>
    </ligand>
</feature>
<feature type="binding site" evidence="2">
    <location>
        <position position="276"/>
    </location>
    <ligand>
        <name>Ca(2+)</name>
        <dbReference type="ChEBI" id="CHEBI:29108"/>
        <label>1</label>
    </ligand>
</feature>
<feature type="binding site" evidence="2">
    <location>
        <position position="279"/>
    </location>
    <ligand>
        <name>Ca(2+)</name>
        <dbReference type="ChEBI" id="CHEBI:29108"/>
        <label>2</label>
    </ligand>
</feature>
<feature type="modified residue" description="Phosphoserine" evidence="1">
    <location>
        <position position="29"/>
    </location>
</feature>
<feature type="modified residue" description="Phosphoserine" evidence="1">
    <location>
        <position position="82"/>
    </location>
</feature>
<feature type="modified residue" description="Phosphoserine" evidence="1">
    <location>
        <position position="89"/>
    </location>
</feature>
<feature type="modified residue" description="N6-succinyllysine" evidence="10">
    <location>
        <position position="229"/>
    </location>
</feature>
<feature type="modified residue" description="Phosphoserine" evidence="9">
    <location>
        <position position="297"/>
    </location>
</feature>
<feature type="modified residue" description="Phosphoserine" evidence="9">
    <location>
        <position position="443"/>
    </location>
</feature>
<feature type="modified residue" description="Phosphothreonine" evidence="1">
    <location>
        <position position="444"/>
    </location>
</feature>
<feature type="modified residue" description="Phosphothreonine" evidence="1">
    <location>
        <position position="446"/>
    </location>
</feature>
<feature type="modified residue" description="N6-succinyllysine" evidence="10">
    <location>
        <position position="460"/>
    </location>
</feature>
<feature type="modified residue" description="Phosphoserine" evidence="1">
    <location>
        <position position="513"/>
    </location>
</feature>
<feature type="modified residue" description="N6-succinyllysine" evidence="10">
    <location>
        <position position="543"/>
    </location>
</feature>
<feature type="modified residue" description="N6-methyllysine" evidence="1">
    <location>
        <position position="558"/>
    </location>
</feature>
<feature type="modified residue" description="Phosphothreonine" evidence="3">
    <location>
        <position position="570"/>
    </location>
</feature>
<feature type="modified residue" description="N6-succinyllysine" evidence="10">
    <location>
        <position position="588"/>
    </location>
</feature>
<feature type="disulfide bond" evidence="5">
    <location>
        <begin position="77"/>
        <end position="86"/>
    </location>
</feature>
<feature type="disulfide bond" evidence="5">
    <location>
        <begin position="99"/>
        <end position="115"/>
    </location>
</feature>
<feature type="disulfide bond" evidence="5">
    <location>
        <begin position="114"/>
        <end position="125"/>
    </location>
</feature>
<feature type="disulfide bond" evidence="5">
    <location>
        <begin position="148"/>
        <end position="193"/>
    </location>
</feature>
<feature type="disulfide bond" evidence="5">
    <location>
        <begin position="192"/>
        <end position="201"/>
    </location>
</feature>
<feature type="disulfide bond" evidence="5">
    <location>
        <begin position="224"/>
        <end position="270"/>
    </location>
</feature>
<feature type="disulfide bond" evidence="5">
    <location>
        <begin position="269"/>
        <end position="277"/>
    </location>
</feature>
<feature type="disulfide bond" evidence="5">
    <location>
        <begin position="289"/>
        <end position="303"/>
    </location>
</feature>
<feature type="disulfide bond" evidence="5">
    <location>
        <begin position="302"/>
        <end position="313"/>
    </location>
</feature>
<feature type="disulfide bond" evidence="5">
    <location>
        <begin position="340"/>
        <end position="385"/>
    </location>
</feature>
<feature type="disulfide bond" evidence="5">
    <location>
        <begin position="384"/>
        <end position="393"/>
    </location>
</feature>
<feature type="disulfide bond" evidence="5">
    <location>
        <begin position="416"/>
        <end position="462"/>
    </location>
</feature>
<feature type="disulfide bond" evidence="5">
    <location>
        <begin position="461"/>
        <end position="472"/>
    </location>
</feature>
<feature type="disulfide bond" evidence="5">
    <location>
        <begin position="485"/>
        <end position="501"/>
    </location>
</feature>
<feature type="disulfide bond" evidence="5">
    <location>
        <begin position="500"/>
        <end position="511"/>
    </location>
</feature>
<feature type="disulfide bond" evidence="5">
    <location>
        <begin position="538"/>
        <end position="583"/>
    </location>
</feature>
<feature type="disulfide bond" evidence="5">
    <location>
        <begin position="582"/>
        <end position="591"/>
    </location>
</feature>
<feature type="sequence conflict" description="In Ref. 4; AA sequence." evidence="8" ref="4">
    <original>H</original>
    <variation>D</variation>
    <location>
        <position position="27"/>
    </location>
</feature>
<feature type="sequence conflict" description="In Ref. 4; AA sequence." evidence="8" ref="4">
    <original>H</original>
    <variation>D</variation>
    <location>
        <position position="33"/>
    </location>
</feature>
<feature type="sequence conflict" description="In Ref. 2; BAC34360." evidence="8" ref="2">
    <original>H</original>
    <variation>N</variation>
    <location>
        <position position="33"/>
    </location>
</feature>
<feature type="sequence conflict" description="In Ref. 4; AA sequence." evidence="8" ref="4">
    <original>Q</original>
    <variation>I</variation>
    <location>
        <position position="41"/>
    </location>
</feature>
<feature type="sequence conflict" description="In Ref. 2; BAE35818." evidence="8" ref="2">
    <original>P</original>
    <variation>H</variation>
    <location>
        <position position="561"/>
    </location>
</feature>
<feature type="sequence conflict" description="In Ref. 2; BAC34145." evidence="8" ref="2">
    <original>A</original>
    <variation>T</variation>
    <location>
        <position position="606"/>
    </location>
</feature>
<evidence type="ECO:0000250" key="1">
    <source>
        <dbReference type="UniProtKB" id="P02768"/>
    </source>
</evidence>
<evidence type="ECO:0000250" key="2">
    <source>
        <dbReference type="UniProtKB" id="P02769"/>
    </source>
</evidence>
<evidence type="ECO:0000250" key="3">
    <source>
        <dbReference type="UniProtKB" id="P02770"/>
    </source>
</evidence>
<evidence type="ECO:0000255" key="4"/>
<evidence type="ECO:0000255" key="5">
    <source>
        <dbReference type="PROSITE-ProRule" id="PRU00769"/>
    </source>
</evidence>
<evidence type="ECO:0000269" key="6">
    <source>
    </source>
</evidence>
<evidence type="ECO:0000269" key="7">
    <source>
    </source>
</evidence>
<evidence type="ECO:0000305" key="8"/>
<evidence type="ECO:0007744" key="9">
    <source>
    </source>
</evidence>
<evidence type="ECO:0007744" key="10">
    <source>
    </source>
</evidence>
<reference key="1">
    <citation type="submission" date="2000-05" db="EMBL/GenBank/DDBJ databases">
        <authorList>
            <person name="Van Reeth T."/>
            <person name="Dreze P.L."/>
            <person name="Gabant P."/>
            <person name="Szpirer C."/>
            <person name="Szpirer J."/>
        </authorList>
    </citation>
    <scope>NUCLEOTIDE SEQUENCE [MRNA]</scope>
    <scope>NUCLEOTIDE SEQUENCE [GENOMIC DNA] OF 1-205</scope>
    <source>
        <strain>129/SvEvTacfBr</strain>
        <tissue>Liver</tissue>
    </source>
</reference>
<reference key="2">
    <citation type="journal article" date="2005" name="Science">
        <title>The transcriptional landscape of the mammalian genome.</title>
        <authorList>
            <person name="Carninci P."/>
            <person name="Kasukawa T."/>
            <person name="Katayama S."/>
            <person name="Gough J."/>
            <person name="Frith M.C."/>
            <person name="Maeda N."/>
            <person name="Oyama R."/>
            <person name="Ravasi T."/>
            <person name="Lenhard B."/>
            <person name="Wells C."/>
            <person name="Kodzius R."/>
            <person name="Shimokawa K."/>
            <person name="Bajic V.B."/>
            <person name="Brenner S.E."/>
            <person name="Batalov S."/>
            <person name="Forrest A.R."/>
            <person name="Zavolan M."/>
            <person name="Davis M.J."/>
            <person name="Wilming L.G."/>
            <person name="Aidinis V."/>
            <person name="Allen J.E."/>
            <person name="Ambesi-Impiombato A."/>
            <person name="Apweiler R."/>
            <person name="Aturaliya R.N."/>
            <person name="Bailey T.L."/>
            <person name="Bansal M."/>
            <person name="Baxter L."/>
            <person name="Beisel K.W."/>
            <person name="Bersano T."/>
            <person name="Bono H."/>
            <person name="Chalk A.M."/>
            <person name="Chiu K.P."/>
            <person name="Choudhary V."/>
            <person name="Christoffels A."/>
            <person name="Clutterbuck D.R."/>
            <person name="Crowe M.L."/>
            <person name="Dalla E."/>
            <person name="Dalrymple B.P."/>
            <person name="de Bono B."/>
            <person name="Della Gatta G."/>
            <person name="di Bernardo D."/>
            <person name="Down T."/>
            <person name="Engstrom P."/>
            <person name="Fagiolini M."/>
            <person name="Faulkner G."/>
            <person name="Fletcher C.F."/>
            <person name="Fukushima T."/>
            <person name="Furuno M."/>
            <person name="Futaki S."/>
            <person name="Gariboldi M."/>
            <person name="Georgii-Hemming P."/>
            <person name="Gingeras T.R."/>
            <person name="Gojobori T."/>
            <person name="Green R.E."/>
            <person name="Gustincich S."/>
            <person name="Harbers M."/>
            <person name="Hayashi Y."/>
            <person name="Hensch T.K."/>
            <person name="Hirokawa N."/>
            <person name="Hill D."/>
            <person name="Huminiecki L."/>
            <person name="Iacono M."/>
            <person name="Ikeo K."/>
            <person name="Iwama A."/>
            <person name="Ishikawa T."/>
            <person name="Jakt M."/>
            <person name="Kanapin A."/>
            <person name="Katoh M."/>
            <person name="Kawasawa Y."/>
            <person name="Kelso J."/>
            <person name="Kitamura H."/>
            <person name="Kitano H."/>
            <person name="Kollias G."/>
            <person name="Krishnan S.P."/>
            <person name="Kruger A."/>
            <person name="Kummerfeld S.K."/>
            <person name="Kurochkin I.V."/>
            <person name="Lareau L.F."/>
            <person name="Lazarevic D."/>
            <person name="Lipovich L."/>
            <person name="Liu J."/>
            <person name="Liuni S."/>
            <person name="McWilliam S."/>
            <person name="Madan Babu M."/>
            <person name="Madera M."/>
            <person name="Marchionni L."/>
            <person name="Matsuda H."/>
            <person name="Matsuzawa S."/>
            <person name="Miki H."/>
            <person name="Mignone F."/>
            <person name="Miyake S."/>
            <person name="Morris K."/>
            <person name="Mottagui-Tabar S."/>
            <person name="Mulder N."/>
            <person name="Nakano N."/>
            <person name="Nakauchi H."/>
            <person name="Ng P."/>
            <person name="Nilsson R."/>
            <person name="Nishiguchi S."/>
            <person name="Nishikawa S."/>
            <person name="Nori F."/>
            <person name="Ohara O."/>
            <person name="Okazaki Y."/>
            <person name="Orlando V."/>
            <person name="Pang K.C."/>
            <person name="Pavan W.J."/>
            <person name="Pavesi G."/>
            <person name="Pesole G."/>
            <person name="Petrovsky N."/>
            <person name="Piazza S."/>
            <person name="Reed J."/>
            <person name="Reid J.F."/>
            <person name="Ring B.Z."/>
            <person name="Ringwald M."/>
            <person name="Rost B."/>
            <person name="Ruan Y."/>
            <person name="Salzberg S.L."/>
            <person name="Sandelin A."/>
            <person name="Schneider C."/>
            <person name="Schoenbach C."/>
            <person name="Sekiguchi K."/>
            <person name="Semple C.A."/>
            <person name="Seno S."/>
            <person name="Sessa L."/>
            <person name="Sheng Y."/>
            <person name="Shibata Y."/>
            <person name="Shimada H."/>
            <person name="Shimada K."/>
            <person name="Silva D."/>
            <person name="Sinclair B."/>
            <person name="Sperling S."/>
            <person name="Stupka E."/>
            <person name="Sugiura K."/>
            <person name="Sultana R."/>
            <person name="Takenaka Y."/>
            <person name="Taki K."/>
            <person name="Tammoja K."/>
            <person name="Tan S.L."/>
            <person name="Tang S."/>
            <person name="Taylor M.S."/>
            <person name="Tegner J."/>
            <person name="Teichmann S.A."/>
            <person name="Ueda H.R."/>
            <person name="van Nimwegen E."/>
            <person name="Verardo R."/>
            <person name="Wei C.L."/>
            <person name="Yagi K."/>
            <person name="Yamanishi H."/>
            <person name="Zabarovsky E."/>
            <person name="Zhu S."/>
            <person name="Zimmer A."/>
            <person name="Hide W."/>
            <person name="Bult C."/>
            <person name="Grimmond S.M."/>
            <person name="Teasdale R.D."/>
            <person name="Liu E.T."/>
            <person name="Brusic V."/>
            <person name="Quackenbush J."/>
            <person name="Wahlestedt C."/>
            <person name="Mattick J.S."/>
            <person name="Hume D.A."/>
            <person name="Kai C."/>
            <person name="Sasaki D."/>
            <person name="Tomaru Y."/>
            <person name="Fukuda S."/>
            <person name="Kanamori-Katayama M."/>
            <person name="Suzuki M."/>
            <person name="Aoki J."/>
            <person name="Arakawa T."/>
            <person name="Iida J."/>
            <person name="Imamura K."/>
            <person name="Itoh M."/>
            <person name="Kato T."/>
            <person name="Kawaji H."/>
            <person name="Kawagashira N."/>
            <person name="Kawashima T."/>
            <person name="Kojima M."/>
            <person name="Kondo S."/>
            <person name="Konno H."/>
            <person name="Nakano K."/>
            <person name="Ninomiya N."/>
            <person name="Nishio T."/>
            <person name="Okada M."/>
            <person name="Plessy C."/>
            <person name="Shibata K."/>
            <person name="Shiraki T."/>
            <person name="Suzuki S."/>
            <person name="Tagami M."/>
            <person name="Waki K."/>
            <person name="Watahiki A."/>
            <person name="Okamura-Oho Y."/>
            <person name="Suzuki H."/>
            <person name="Kawai J."/>
            <person name="Hayashizaki Y."/>
        </authorList>
    </citation>
    <scope>NUCLEOTIDE SEQUENCE [LARGE SCALE MRNA]</scope>
    <source>
        <strain>C57BL/6J</strain>
        <tissue>Liver</tissue>
        <tissue>Stomach</tissue>
        <tissue>Thymus</tissue>
        <tissue>Tongue</tissue>
    </source>
</reference>
<reference key="3">
    <citation type="journal article" date="2004" name="Genome Res.">
        <title>The status, quality, and expansion of the NIH full-length cDNA project: the Mammalian Gene Collection (MGC).</title>
        <authorList>
            <consortium name="The MGC Project Team"/>
        </authorList>
    </citation>
    <scope>NUCLEOTIDE SEQUENCE [LARGE SCALE MRNA]</scope>
    <source>
        <strain>FVB/N</strain>
        <tissue>Kidney</tissue>
        <tissue>Liver</tissue>
    </source>
</reference>
<reference key="4">
    <citation type="journal article" date="1992" name="Electrophoresis">
        <title>Mouse liver protein database: a catalog of proteins detected by two-dimensional gel electrophoresis.</title>
        <authorList>
            <person name="Giometti C.S."/>
            <person name="Taylor J."/>
            <person name="Tollaksen S.L."/>
        </authorList>
    </citation>
    <scope>PROTEIN SEQUENCE OF 25-44</scope>
    <source>
        <tissue>Liver</tissue>
    </source>
</reference>
<reference key="5">
    <citation type="submission" date="2009-01" db="UniProtKB">
        <authorList>
            <person name="Lubec G."/>
            <person name="Klug S."/>
            <person name="Yang J.W."/>
            <person name="Zigmond M."/>
            <person name="Kang S.U."/>
            <person name="Sunyer B."/>
            <person name="Chen W.-Q."/>
        </authorList>
    </citation>
    <scope>PROTEIN SEQUENCE OF 35-57; 66-75; 89-105; 243-257; 299-309; 348-372; 422-434; 439-452; 470-483; 509-524; 550-558 AND 570-602</scope>
    <scope>IDENTIFICATION BY MASS SPECTROMETRY</scope>
    <source>
        <strain>C57BL/6J</strain>
        <strain>OF1</strain>
        <tissue>Brain</tissue>
        <tissue>Hippocampus</tissue>
    </source>
</reference>
<reference key="6">
    <citation type="journal article" date="1985" name="Mol. Biol. Evol.">
        <title>The rate of molecular evolution of alpha-fetoprotein approaches that of pseudogenes.</title>
        <authorList>
            <person name="Minghetti P.P."/>
            <person name="Law S.W."/>
            <person name="Dugaiczyk A."/>
        </authorList>
    </citation>
    <scope>NUCLEOTIDE SEQUENCE [MRNA] OF 99-516</scope>
</reference>
<reference key="7">
    <citation type="journal article" date="1990" name="Gene">
        <title>Empty and occupied insertion site of the truncated LINE-1 repeat located in the mouse serum albumin-encoding gene.</title>
        <authorList>
            <person name="Boccaccio C."/>
            <person name="Deschatrette J."/>
            <person name="Meunier-Rotival M."/>
        </authorList>
    </citation>
    <scope>NUCLEOTIDE SEQUENCE [GENOMIC DNA] OF 477-551</scope>
    <source>
        <strain>BALB/cJ</strain>
    </source>
</reference>
<reference key="8">
    <citation type="journal article" date="2010" name="Cell">
        <title>A tissue-specific atlas of mouse protein phosphorylation and expression.</title>
        <authorList>
            <person name="Huttlin E.L."/>
            <person name="Jedrychowski M.P."/>
            <person name="Elias J.E."/>
            <person name="Goswami T."/>
            <person name="Rad R."/>
            <person name="Beausoleil S.A."/>
            <person name="Villen J."/>
            <person name="Haas W."/>
            <person name="Sowa M.E."/>
            <person name="Gygi S.P."/>
        </authorList>
    </citation>
    <scope>PHOSPHORYLATION [LARGE SCALE ANALYSIS] AT SER-297 AND SER-443</scope>
    <scope>IDENTIFICATION BY MASS SPECTROMETRY [LARGE SCALE ANALYSIS]</scope>
    <source>
        <tissue>Brain</tissue>
        <tissue>Brown adipose tissue</tissue>
        <tissue>Heart</tissue>
        <tissue>Kidney</tissue>
        <tissue>Liver</tissue>
        <tissue>Lung</tissue>
        <tissue>Pancreas</tissue>
        <tissue>Spleen</tissue>
        <tissue>Testis</tissue>
    </source>
</reference>
<reference key="9">
    <citation type="journal article" date="2013" name="Mol. Cell">
        <title>SIRT5-mediated lysine desuccinylation impacts diverse metabolic pathways.</title>
        <authorList>
            <person name="Park J."/>
            <person name="Chen Y."/>
            <person name="Tishkoff D.X."/>
            <person name="Peng C."/>
            <person name="Tan M."/>
            <person name="Dai L."/>
            <person name="Xie Z."/>
            <person name="Zhang Y."/>
            <person name="Zwaans B.M."/>
            <person name="Skinner M.E."/>
            <person name="Lombard D.B."/>
            <person name="Zhao Y."/>
        </authorList>
    </citation>
    <scope>SUCCINYLATION [LARGE SCALE ANALYSIS] AT LYS-229; LYS-460; LYS-543 AND LYS-588</scope>
    <scope>IDENTIFICATION BY MASS SPECTROMETRY [LARGE SCALE ANALYSIS]</scope>
    <source>
        <tissue>Liver</tissue>
    </source>
</reference>
<reference key="10">
    <citation type="journal article" date="2019" name="Exp. Cell Res.">
        <title>Fam208a orchestrates interaction protein network essential for early embryonic development and cell division.</title>
        <authorList>
            <person name="Gresakova V."/>
            <person name="Novosadova V."/>
            <person name="Prochazkova M."/>
            <person name="Bhargava S."/>
            <person name="Jenickova I."/>
            <person name="Prochazka J."/>
            <person name="Sedlacek R."/>
        </authorList>
    </citation>
    <scope>INTERACTION WITH TASOR</scope>
    <scope>TISSUE SPECIFICITY</scope>
</reference>
<reference key="11">
    <citation type="journal article" date="2019" name="Sci. Rep.">
        <title>A complex of novel protease inhibitor, ovostatin homolog, with its cognate proteases in immature mice uterine luminal fluid.</title>
        <authorList>
            <person name="Huang H.L."/>
            <person name="Li S.C."/>
            <person name="Wu J.F."/>
        </authorList>
    </citation>
    <scope>INTERACTION IN A COMPLEX WITH A2ML1; C3 AND CLCA1</scope>
</reference>
<proteinExistence type="evidence at protein level"/>
<sequence>MKWVTFLLLLFVSGSAFSRGVFRREAHKSEIAHRYNDLGEQHFKGLVLIAFSQYLQKCSYDEHAKLVQEVTDFAKTCVADESAANCDKSLHTLFGDKLCAIPNLRENYGELADCCTKQEPERNECFLQHKDDNPSLPPFERPEAEAMCTSFKENPTTFMGHYLHEVARRHPYFYAPELLYYAEQYNEILTQCCAEADKESCLTPKLDGVKEKALVSSVRQRMKCSSMQKFGERAFKAWAVARLSQTFPNADFAEITKLATDLTKVNKECCHGDLLECADDRAELAKYMCENQATISSKLQTCCDKPLLKKAHCLSEVEHDTMPADLPAIAADFVEDQEVCKNYAEAKDVFLGTFLYEYSRRHPDYSVSLLLRLAKKYEATLEKCCAEANPPACYGTVLAEFQPLVEEPKNLVKTNCDLYEKLGEYGFQNAILVRYTQKAPQVSTPTLVEAARNLGRVGTKCCTLPEDQRLPCVEDYLSAILNRVCLLHEKTPVSEHVTKCCSGSLVERRPCFSALTVDETYVPKEFKAETFTFHSDICTLPEKEKQIKKQTALAELVKHKPKATAEQLKTVMDDFAQFLDTCCKAADKDTCFSTEGPNLVTRCKDALA</sequence>
<organism>
    <name type="scientific">Mus musculus</name>
    <name type="common">Mouse</name>
    <dbReference type="NCBI Taxonomy" id="10090"/>
    <lineage>
        <taxon>Eukaryota</taxon>
        <taxon>Metazoa</taxon>
        <taxon>Chordata</taxon>
        <taxon>Craniata</taxon>
        <taxon>Vertebrata</taxon>
        <taxon>Euteleostomi</taxon>
        <taxon>Mammalia</taxon>
        <taxon>Eutheria</taxon>
        <taxon>Euarchontoglires</taxon>
        <taxon>Glires</taxon>
        <taxon>Rodentia</taxon>
        <taxon>Myomorpha</taxon>
        <taxon>Muroidea</taxon>
        <taxon>Muridae</taxon>
        <taxon>Murinae</taxon>
        <taxon>Mus</taxon>
        <taxon>Mus</taxon>
    </lineage>
</organism>
<dbReference type="EMBL" id="AJ011413">
    <property type="protein sequence ID" value="CAA09617.1"/>
    <property type="molecule type" value="mRNA"/>
</dbReference>
<dbReference type="EMBL" id="AJ277794">
    <property type="protein sequence ID" value="CAC81903.1"/>
    <property type="molecule type" value="Genomic_DNA"/>
</dbReference>
<dbReference type="EMBL" id="AK010025">
    <property type="protein sequence ID" value="BAB26650.1"/>
    <property type="molecule type" value="mRNA"/>
</dbReference>
<dbReference type="EMBL" id="AK050248">
    <property type="protein sequence ID" value="BAC34145.1"/>
    <property type="molecule type" value="mRNA"/>
</dbReference>
<dbReference type="EMBL" id="AK050644">
    <property type="protein sequence ID" value="BAC34360.1"/>
    <property type="molecule type" value="mRNA"/>
</dbReference>
<dbReference type="EMBL" id="AK160487">
    <property type="protein sequence ID" value="BAE35818.1"/>
    <property type="molecule type" value="mRNA"/>
</dbReference>
<dbReference type="EMBL" id="BC024643">
    <property type="protein sequence ID" value="AAH24643.1"/>
    <property type="molecule type" value="mRNA"/>
</dbReference>
<dbReference type="EMBL" id="BC049971">
    <property type="protein sequence ID" value="AAH49971.1"/>
    <property type="molecule type" value="mRNA"/>
</dbReference>
<dbReference type="EMBL" id="M16111">
    <property type="protein sequence ID" value="AAA37190.1"/>
    <property type="molecule type" value="mRNA"/>
</dbReference>
<dbReference type="EMBL" id="X13060">
    <property type="protein sequence ID" value="CAA31458.1"/>
    <property type="molecule type" value="Genomic_DNA"/>
</dbReference>
<dbReference type="CCDS" id="CCDS19412.1"/>
<dbReference type="PIR" id="A05139">
    <property type="entry name" value="A05139"/>
</dbReference>
<dbReference type="RefSeq" id="NP_033784.2">
    <property type="nucleotide sequence ID" value="NM_009654.4"/>
</dbReference>
<dbReference type="SMR" id="P07724"/>
<dbReference type="BioGRID" id="198060">
    <property type="interactions" value="45"/>
</dbReference>
<dbReference type="FunCoup" id="P07724">
    <property type="interactions" value="486"/>
</dbReference>
<dbReference type="IntAct" id="P07724">
    <property type="interactions" value="9"/>
</dbReference>
<dbReference type="MINT" id="P07724"/>
<dbReference type="STRING" id="10090.ENSMUSP00000031314"/>
<dbReference type="BindingDB" id="P07724"/>
<dbReference type="ChEMBL" id="CHEMBL1075271"/>
<dbReference type="Allergome" id="755">
    <property type="allergen name" value="Mus m 4"/>
</dbReference>
<dbReference type="CarbonylDB" id="P07724"/>
<dbReference type="GlyGen" id="P07724">
    <property type="glycosylation" value="2 sites, 1 O-linked glycan (1 site)"/>
</dbReference>
<dbReference type="iPTMnet" id="P07724"/>
<dbReference type="PhosphoSitePlus" id="P07724"/>
<dbReference type="SwissPalm" id="P07724"/>
<dbReference type="REPRODUCTION-2DPAGE" id="IPI00131695"/>
<dbReference type="REPRODUCTION-2DPAGE" id="P07724"/>
<dbReference type="REPRODUCTION-2DPAGE" id="Q8CG74"/>
<dbReference type="CPTAC" id="non-CPTAC-3890"/>
<dbReference type="jPOST" id="P07724"/>
<dbReference type="PaxDb" id="10090-ENSMUSP00000031314"/>
<dbReference type="PeptideAtlas" id="P07724"/>
<dbReference type="ProteomicsDB" id="281964"/>
<dbReference type="ABCD" id="P07724">
    <property type="antibodies" value="88 sequenced antibodies"/>
</dbReference>
<dbReference type="Antibodypedia" id="3342">
    <property type="antibodies" value="3386 antibodies from 55 providers"/>
</dbReference>
<dbReference type="DNASU" id="11657"/>
<dbReference type="Ensembl" id="ENSMUST00000031314.10">
    <property type="protein sequence ID" value="ENSMUSP00000031314.9"/>
    <property type="gene ID" value="ENSMUSG00000029368.11"/>
</dbReference>
<dbReference type="GeneID" id="11657"/>
<dbReference type="KEGG" id="mmu:11657"/>
<dbReference type="UCSC" id="uc008yaz.2">
    <property type="organism name" value="mouse"/>
</dbReference>
<dbReference type="AGR" id="MGI:87991"/>
<dbReference type="CTD" id="213"/>
<dbReference type="MGI" id="MGI:87991">
    <property type="gene designation" value="Alb"/>
</dbReference>
<dbReference type="VEuPathDB" id="HostDB:ENSMUSG00000029368"/>
<dbReference type="eggNOG" id="ENOG502R7EA">
    <property type="taxonomic scope" value="Eukaryota"/>
</dbReference>
<dbReference type="GeneTree" id="ENSGT00390000000113"/>
<dbReference type="HOGENOM" id="CLU_030161_0_0_1"/>
<dbReference type="InParanoid" id="P07724"/>
<dbReference type="OMA" id="ADPHACY"/>
<dbReference type="OrthoDB" id="9875082at2759"/>
<dbReference type="PhylomeDB" id="P07724"/>
<dbReference type="TreeFam" id="TF335561"/>
<dbReference type="Reactome" id="R-MMU-114608">
    <property type="pathway name" value="Platelet degranulation"/>
</dbReference>
<dbReference type="Reactome" id="R-MMU-159418">
    <property type="pathway name" value="Recycling of bile acids and salts"/>
</dbReference>
<dbReference type="Reactome" id="R-MMU-189451">
    <property type="pathway name" value="Heme biosynthesis"/>
</dbReference>
<dbReference type="Reactome" id="R-MMU-189483">
    <property type="pathway name" value="Heme degradation"/>
</dbReference>
<dbReference type="Reactome" id="R-MMU-2168880">
    <property type="pathway name" value="Scavenging of heme from plasma"/>
</dbReference>
<dbReference type="Reactome" id="R-MMU-381426">
    <property type="pathway name" value="Regulation of Insulin-like Growth Factor (IGF) transport and uptake by Insulin-like Growth Factor Binding Proteins (IGFBPs)"/>
</dbReference>
<dbReference type="Reactome" id="R-MMU-8957275">
    <property type="pathway name" value="Post-translational protein phosphorylation"/>
</dbReference>
<dbReference type="Reactome" id="R-MMU-8964058">
    <property type="pathway name" value="HDL remodeling"/>
</dbReference>
<dbReference type="Reactome" id="R-MMU-9707564">
    <property type="pathway name" value="Cytoprotection by HMOX1"/>
</dbReference>
<dbReference type="Reactome" id="R-MMU-9749641">
    <property type="pathway name" value="Aspirin ADME"/>
</dbReference>
<dbReference type="Reactome" id="R-MMU-9757110">
    <property type="pathway name" value="Prednisone ADME"/>
</dbReference>
<dbReference type="Reactome" id="R-MMU-9793528">
    <property type="pathway name" value="Ciprofloxacin ADME"/>
</dbReference>
<dbReference type="SABIO-RK" id="P07724"/>
<dbReference type="BioGRID-ORCS" id="11657">
    <property type="hits" value="0 hits in 79 CRISPR screens"/>
</dbReference>
<dbReference type="ChiTaRS" id="Alb">
    <property type="organism name" value="mouse"/>
</dbReference>
<dbReference type="PRO" id="PR:P07724"/>
<dbReference type="Proteomes" id="UP000000589">
    <property type="component" value="Chromosome 5"/>
</dbReference>
<dbReference type="RNAct" id="P07724">
    <property type="molecule type" value="protein"/>
</dbReference>
<dbReference type="Bgee" id="ENSMUSG00000029368">
    <property type="expression patterns" value="Expressed in gall bladder and 93 other cell types or tissues"/>
</dbReference>
<dbReference type="ExpressionAtlas" id="P07724">
    <property type="expression patterns" value="baseline and differential"/>
</dbReference>
<dbReference type="GO" id="GO:0005737">
    <property type="term" value="C:cytoplasm"/>
    <property type="evidence" value="ECO:0000314"/>
    <property type="project" value="MGI"/>
</dbReference>
<dbReference type="GO" id="GO:0005783">
    <property type="term" value="C:endoplasmic reticulum"/>
    <property type="evidence" value="ECO:0007669"/>
    <property type="project" value="Ensembl"/>
</dbReference>
<dbReference type="GO" id="GO:0070062">
    <property type="term" value="C:extracellular exosome"/>
    <property type="evidence" value="ECO:0007669"/>
    <property type="project" value="Ensembl"/>
</dbReference>
<dbReference type="GO" id="GO:0005576">
    <property type="term" value="C:extracellular region"/>
    <property type="evidence" value="ECO:0000314"/>
    <property type="project" value="MGI"/>
</dbReference>
<dbReference type="GO" id="GO:0005615">
    <property type="term" value="C:extracellular space"/>
    <property type="evidence" value="ECO:0000314"/>
    <property type="project" value="MGI"/>
</dbReference>
<dbReference type="GO" id="GO:0005794">
    <property type="term" value="C:Golgi apparatus"/>
    <property type="evidence" value="ECO:0007669"/>
    <property type="project" value="Ensembl"/>
</dbReference>
<dbReference type="GO" id="GO:0043209">
    <property type="term" value="C:myelin sheath"/>
    <property type="evidence" value="ECO:0007005"/>
    <property type="project" value="UniProtKB"/>
</dbReference>
<dbReference type="GO" id="GO:0032991">
    <property type="term" value="C:protein-containing complex"/>
    <property type="evidence" value="ECO:0000250"/>
    <property type="project" value="UniProtKB"/>
</dbReference>
<dbReference type="GO" id="GO:0003677">
    <property type="term" value="F:DNA binding"/>
    <property type="evidence" value="ECO:0000250"/>
    <property type="project" value="UniProtKB"/>
</dbReference>
<dbReference type="GO" id="GO:1903981">
    <property type="term" value="F:enterobactin binding"/>
    <property type="evidence" value="ECO:0000250"/>
    <property type="project" value="UniProtKB"/>
</dbReference>
<dbReference type="GO" id="GO:0140272">
    <property type="term" value="F:exogenous protein binding"/>
    <property type="evidence" value="ECO:0007669"/>
    <property type="project" value="Ensembl"/>
</dbReference>
<dbReference type="GO" id="GO:0005504">
    <property type="term" value="F:fatty acid binding"/>
    <property type="evidence" value="ECO:0007669"/>
    <property type="project" value="Ensembl"/>
</dbReference>
<dbReference type="GO" id="GO:0042802">
    <property type="term" value="F:identical protein binding"/>
    <property type="evidence" value="ECO:0007669"/>
    <property type="project" value="Ensembl"/>
</dbReference>
<dbReference type="GO" id="GO:0046872">
    <property type="term" value="F:metal ion binding"/>
    <property type="evidence" value="ECO:0007669"/>
    <property type="project" value="UniProtKB-KW"/>
</dbReference>
<dbReference type="GO" id="GO:0019825">
    <property type="term" value="F:oxygen binding"/>
    <property type="evidence" value="ECO:0007669"/>
    <property type="project" value="Ensembl"/>
</dbReference>
<dbReference type="GO" id="GO:0051087">
    <property type="term" value="F:protein-folding chaperone binding"/>
    <property type="evidence" value="ECO:0007669"/>
    <property type="project" value="Ensembl"/>
</dbReference>
<dbReference type="GO" id="GO:0030170">
    <property type="term" value="F:pyridoxal phosphate binding"/>
    <property type="evidence" value="ECO:0000250"/>
    <property type="project" value="UniProtKB"/>
</dbReference>
<dbReference type="GO" id="GO:0015643">
    <property type="term" value="F:toxic substance binding"/>
    <property type="evidence" value="ECO:0000250"/>
    <property type="project" value="UniProtKB"/>
</dbReference>
<dbReference type="GO" id="GO:0072732">
    <property type="term" value="P:cellular response to calcium ion starvation"/>
    <property type="evidence" value="ECO:0000250"/>
    <property type="project" value="UniProtKB"/>
</dbReference>
<dbReference type="GO" id="GO:0009267">
    <property type="term" value="P:cellular response to starvation"/>
    <property type="evidence" value="ECO:0000250"/>
    <property type="project" value="UniProtKB"/>
</dbReference>
<dbReference type="GO" id="GO:0051902">
    <property type="term" value="P:negative regulation of mitochondrial depolarization"/>
    <property type="evidence" value="ECO:0000250"/>
    <property type="project" value="UniProtKB"/>
</dbReference>
<dbReference type="CDD" id="cd00015">
    <property type="entry name" value="ALBUMIN"/>
    <property type="match status" value="3"/>
</dbReference>
<dbReference type="FunFam" id="1.10.246.10:FF:000001">
    <property type="entry name" value="Serum albumin"/>
    <property type="match status" value="2"/>
</dbReference>
<dbReference type="FunFam" id="1.10.246.10:FF:000002">
    <property type="entry name" value="Serum albumin"/>
    <property type="match status" value="2"/>
</dbReference>
<dbReference type="FunFam" id="1.10.246.10:FF:000003">
    <property type="entry name" value="Serum albumin"/>
    <property type="match status" value="1"/>
</dbReference>
<dbReference type="Gene3D" id="1.10.246.10">
    <property type="match status" value="6"/>
</dbReference>
<dbReference type="InterPro" id="IPR000264">
    <property type="entry name" value="ALB/AFP/VDB"/>
</dbReference>
<dbReference type="InterPro" id="IPR020858">
    <property type="entry name" value="Serum_albumin-like"/>
</dbReference>
<dbReference type="InterPro" id="IPR021177">
    <property type="entry name" value="Serum_albumin/AFP/Afamin"/>
</dbReference>
<dbReference type="InterPro" id="IPR020857">
    <property type="entry name" value="Serum_albumin_CS"/>
</dbReference>
<dbReference type="InterPro" id="IPR014760">
    <property type="entry name" value="Serum_albumin_N"/>
</dbReference>
<dbReference type="PANTHER" id="PTHR11385:SF15">
    <property type="entry name" value="ALBUMIN"/>
    <property type="match status" value="1"/>
</dbReference>
<dbReference type="PANTHER" id="PTHR11385">
    <property type="entry name" value="SERUM ALBUMIN-RELATED"/>
    <property type="match status" value="1"/>
</dbReference>
<dbReference type="Pfam" id="PF00273">
    <property type="entry name" value="Serum_albumin"/>
    <property type="match status" value="3"/>
</dbReference>
<dbReference type="PIRSF" id="PIRSF002520">
    <property type="entry name" value="Serum_albumin_subgroup"/>
    <property type="match status" value="1"/>
</dbReference>
<dbReference type="PRINTS" id="PR00802">
    <property type="entry name" value="SERUMALBUMIN"/>
</dbReference>
<dbReference type="SMART" id="SM00103">
    <property type="entry name" value="ALBUMIN"/>
    <property type="match status" value="3"/>
</dbReference>
<dbReference type="SUPFAM" id="SSF48552">
    <property type="entry name" value="Serum albumin-like"/>
    <property type="match status" value="3"/>
</dbReference>
<dbReference type="PROSITE" id="PS00212">
    <property type="entry name" value="ALBUMIN_1"/>
    <property type="match status" value="3"/>
</dbReference>
<dbReference type="PROSITE" id="PS51438">
    <property type="entry name" value="ALBUMIN_2"/>
    <property type="match status" value="3"/>
</dbReference>
<accession>P07724</accession>
<accession>Q3TV03</accession>
<accession>Q61802</accession>
<accession>Q8C7C7</accession>
<accession>Q8C7H3</accession>
<accession>Q8CG74</accession>
<comment type="function">
    <text evidence="1 2">Binds water, Ca(2+), Na(+), K(+), fatty acids, hormones, bilirubin and drugs. Its main function is the regulation of the colloidal osmotic pressure of blood. Major zinc transporter in plasma, typically binds about 80% of all plasma zinc (By similarity). Major calcium and magnesium transporter in plasma, binds approximately 45% of circulating calcium and magnesium in plasma (By similarity). Potentially has more than two calcium-binding sites and might additionally bind calcium in a non-specific manner (By similarity). The shared binding site between zinc and calcium at residue Asp-273 suggests a crosstalk between zinc and calcium transport in the blood (By similarity). The rank order of affinity is zinc &gt; calcium &gt; magnesium (By similarity). Binds to the bacterial siderophore enterobactin and inhibits enterobactin-mediated iron uptake of E.coli from ferric transferrin, and may thereby limit the utilization of iron and growth of enteric bacteria such as E.coli (By similarity). Does not prevent iron uptake by the bacterial siderophore aerobactin (By similarity).</text>
</comment>
<comment type="subunit">
    <text evidence="1 6 7">Part of a complex composed of complement component C3, CLCA1/CLCA3, A2ML1/OH and ALB/serum albumin (PubMed:30899053). Interacts with FCGRT; this interaction regulates ALB homeostasis (By similarity). Interacts with TASOR (PubMed:31112734). In plasma, occurs in a covalently-linked complex with chromophore-bound alpha-1-microglobulin; this interaction does not prevent fatty acid binding to ALB.</text>
</comment>
<comment type="subcellular location">
    <subcellularLocation>
        <location>Secreted</location>
    </subcellularLocation>
</comment>
<comment type="tissue specificity">
    <text evidence="7">Plasma. Expressed in the granular cells within the cerebellum (PubMed:31112734).</text>
</comment>
<comment type="PTM">
    <text evidence="1">Phosphorylated by FAM20C in the extracellular medium.</text>
</comment>
<comment type="similarity">
    <text evidence="5">Belongs to the ALB/AFP/VDB family.</text>
</comment>
<name>ALBU_MOUSE</name>
<keyword id="KW-0106">Calcium</keyword>
<keyword id="KW-0165">Cleavage on pair of basic residues</keyword>
<keyword id="KW-0186">Copper</keyword>
<keyword id="KW-0903">Direct protein sequencing</keyword>
<keyword id="KW-1015">Disulfide bond</keyword>
<keyword id="KW-0446">Lipid-binding</keyword>
<keyword id="KW-0479">Metal-binding</keyword>
<keyword id="KW-0488">Methylation</keyword>
<keyword id="KW-0597">Phosphoprotein</keyword>
<keyword id="KW-1185">Reference proteome</keyword>
<keyword id="KW-0677">Repeat</keyword>
<keyword id="KW-0964">Secreted</keyword>
<keyword id="KW-0732">Signal</keyword>
<keyword id="KW-0862">Zinc</keyword>